<comment type="function">
    <text evidence="1">Part of the small subunit (SSU) processome, first precursor of the small eukaryotic ribosomal subunit. During the assembly of the SSU processome in the nucleolus, many ribosome biogenesis factors, an RNA chaperone and ribosomal proteins associate with the nascent pre-rRNA and work in concert to generate RNA folding, modifications, rearrangements and cleavage as well as targeted degradation of pre-ribosomal RNA by the RNA exosome. Involved in pre-mRNA splicing as component of the spliceosome. Binds to the 5'-stem-loop of U4 snRNA and thereby contributes to spliceosome assembly. The protein undergoes a conformational change upon RNA-binding. Core component of box C/D small nucleolar ribonucleoprotein (snoRNP) complexes that function in methylation of multiple sites on ribosomal RNAs (rRNAs) and messenger RNAs (mRNAs) (By similarity).</text>
</comment>
<comment type="subunit">
    <text evidence="1">Identified in the spliceosome B complex. Component of the U4/U6-U5 tri-snRNP complex composed of the U4, U6 and U5 snRNAs and at least PRPF3, PRPF4, PRPF6, PRPF8, PRPF31, SNRNP200, TXNL4A, WDR57, SNRNP40, DDX23, CD2BP2, PPIH, NHP2L1, EFTUD2, SART1 and USP39. Interacts with RAD17 and PRPF31. The complex formed by SNU13 and PRPF31 binds U4 snRNA. The complex formed by SNU13 and PRPF31 also binds U4atac snRNA, a characteristic component of specific, less abundant spliceosomal complexes. Part of the small subunit (SSU) processome, composed of more than 70 proteins and the RNA chaperone small nucleolar RNA (snoRNA) U3. Core component of box C/D small nucleolar ribonucleoprotein (snoRNP) particles; the core proteins SNU13, NOP56, NOP58 and FBL or FBLL1 assemble stepwise onto the snoRNA (By similarity).</text>
</comment>
<comment type="subcellular location">
    <subcellularLocation>
        <location evidence="1">Nucleus</location>
    </subcellularLocation>
    <subcellularLocation>
        <location evidence="1">Nucleus</location>
        <location evidence="1">Nucleolus</location>
    </subcellularLocation>
    <text evidence="1">Concentrated in the dense fibrillar component of the nucleolus.</text>
</comment>
<comment type="similarity">
    <text evidence="3">Belongs to the eukaryotic ribosomal protein eL8 family.</text>
</comment>
<proteinExistence type="evidence at transcript level"/>
<sequence>MTEADVNPKAYPLADAHLTKKLLDLVQQSCNYKQLRKGANEATKTLNRGISEFIVMAADAEPLEIILHLPLLCEDKNVPYVFVRSKQALGRACGVSRPVIACSVTIKEGSQLKQQIQSIQQSIERLLV</sequence>
<reference key="1">
    <citation type="submission" date="2005-06" db="EMBL/GenBank/DDBJ databases">
        <title>DNA sequences of macaque genes expressed in brain or testis and its evolutionary implications.</title>
        <authorList>
            <consortium name="International consortium for macaque cDNA sequencing and analysis"/>
        </authorList>
    </citation>
    <scope>NUCLEOTIDE SEQUENCE [LARGE SCALE MRNA]</scope>
    <source>
        <tissue>Temporal cortex</tissue>
    </source>
</reference>
<name>NH2L1_MACFA</name>
<organism>
    <name type="scientific">Macaca fascicularis</name>
    <name type="common">Crab-eating macaque</name>
    <name type="synonym">Cynomolgus monkey</name>
    <dbReference type="NCBI Taxonomy" id="9541"/>
    <lineage>
        <taxon>Eukaryota</taxon>
        <taxon>Metazoa</taxon>
        <taxon>Chordata</taxon>
        <taxon>Craniata</taxon>
        <taxon>Vertebrata</taxon>
        <taxon>Euteleostomi</taxon>
        <taxon>Mammalia</taxon>
        <taxon>Eutheria</taxon>
        <taxon>Euarchontoglires</taxon>
        <taxon>Primates</taxon>
        <taxon>Haplorrhini</taxon>
        <taxon>Catarrhini</taxon>
        <taxon>Cercopithecidae</taxon>
        <taxon>Cercopithecinae</taxon>
        <taxon>Macaca</taxon>
    </lineage>
</organism>
<accession>Q4R5C6</accession>
<feature type="chain" id="PRO_0000423261" description="NHP2-like protein 1">
    <location>
        <begin position="1"/>
        <end position="128"/>
    </location>
</feature>
<feature type="initiator methionine" description="Removed; alternate" evidence="1">
    <location>
        <position position="1"/>
    </location>
</feature>
<feature type="chain" id="PRO_0000319315" description="NHP2-like protein 1, N-terminally processed">
    <location>
        <begin position="2"/>
        <end position="128"/>
    </location>
</feature>
<feature type="region of interest" description="Interaction with U4 snRNA and U4atac snRNA" evidence="1">
    <location>
        <begin position="36"/>
        <end position="48"/>
    </location>
</feature>
<feature type="region of interest" description="Important for U4 snRNA-binding" evidence="1">
    <location>
        <begin position="96"/>
        <end position="128"/>
    </location>
</feature>
<feature type="site" description="Interaction with U4 snRNA and U4atac snRNA" evidence="1">
    <location>
        <position position="61"/>
    </location>
</feature>
<feature type="site" description="Interaction with U4 snRNA and U4atac snRNA" evidence="1">
    <location>
        <position position="86"/>
    </location>
</feature>
<feature type="modified residue" description="N-acetylmethionine" evidence="1">
    <location>
        <position position="1"/>
    </location>
</feature>
<feature type="modified residue" description="N-acetylthreonine; in NHP2-like protein 1, N-terminally processed" evidence="1">
    <location>
        <position position="2"/>
    </location>
</feature>
<feature type="modified residue" description="N6-acetyllysine" evidence="2">
    <location>
        <position position="21"/>
    </location>
</feature>
<feature type="modified residue" description="Phosphoserine" evidence="1">
    <location>
        <position position="122"/>
    </location>
</feature>
<evidence type="ECO:0000250" key="1">
    <source>
        <dbReference type="UniProtKB" id="P55769"/>
    </source>
</evidence>
<evidence type="ECO:0000250" key="2">
    <source>
        <dbReference type="UniProtKB" id="Q9D0T1"/>
    </source>
</evidence>
<evidence type="ECO:0000305" key="3"/>
<dbReference type="EMBL" id="AB169618">
    <property type="protein sequence ID" value="BAE01699.1"/>
    <property type="molecule type" value="mRNA"/>
</dbReference>
<dbReference type="RefSeq" id="NP_001271884.1">
    <property type="nucleotide sequence ID" value="NM_001284955.1"/>
</dbReference>
<dbReference type="RefSeq" id="XP_005567197.1">
    <property type="nucleotide sequence ID" value="XM_005567140.2"/>
</dbReference>
<dbReference type="RefSeq" id="XP_045219469.1">
    <property type="nucleotide sequence ID" value="XM_045363534.2"/>
</dbReference>
<dbReference type="RefSeq" id="XP_065378158.1">
    <property type="nucleotide sequence ID" value="XM_065522086.1"/>
</dbReference>
<dbReference type="BMRB" id="Q4R5C6"/>
<dbReference type="SMR" id="Q4R5C6"/>
<dbReference type="STRING" id="9541.ENSMFAP00000015811"/>
<dbReference type="Ensembl" id="ENSMFAT00000066331.2">
    <property type="protein sequence ID" value="ENSMFAP00000015804.1"/>
    <property type="gene ID" value="ENSMFAG00000031096.2"/>
</dbReference>
<dbReference type="GeneID" id="101926085"/>
<dbReference type="VEuPathDB" id="HostDB:ENSMFAG00000031096"/>
<dbReference type="eggNOG" id="KOG3387">
    <property type="taxonomic scope" value="Eukaryota"/>
</dbReference>
<dbReference type="GeneTree" id="ENSGT00550000074840"/>
<dbReference type="Proteomes" id="UP000233100">
    <property type="component" value="Chromosome 10"/>
</dbReference>
<dbReference type="Bgee" id="ENSMFAG00000031096">
    <property type="expression patterns" value="Expressed in pituitary gland and 13 other cell types or tissues"/>
</dbReference>
<dbReference type="GO" id="GO:0005730">
    <property type="term" value="C:nucleolus"/>
    <property type="evidence" value="ECO:0007669"/>
    <property type="project" value="UniProtKB-SubCell"/>
</dbReference>
<dbReference type="GO" id="GO:0005634">
    <property type="term" value="C:nucleus"/>
    <property type="evidence" value="ECO:0000250"/>
    <property type="project" value="UniProtKB"/>
</dbReference>
<dbReference type="GO" id="GO:0032040">
    <property type="term" value="C:small-subunit processome"/>
    <property type="evidence" value="ECO:0000250"/>
    <property type="project" value="UniProtKB"/>
</dbReference>
<dbReference type="GO" id="GO:0071005">
    <property type="term" value="C:U2-type precatalytic spliceosome"/>
    <property type="evidence" value="ECO:0000250"/>
    <property type="project" value="UniProtKB"/>
</dbReference>
<dbReference type="GO" id="GO:0046540">
    <property type="term" value="C:U4/U6 x U5 tri-snRNP complex"/>
    <property type="evidence" value="ECO:0000250"/>
    <property type="project" value="UniProtKB"/>
</dbReference>
<dbReference type="GO" id="GO:0005690">
    <property type="term" value="C:U4atac snRNP"/>
    <property type="evidence" value="ECO:0000250"/>
    <property type="project" value="UniProtKB"/>
</dbReference>
<dbReference type="GO" id="GO:0030622">
    <property type="term" value="F:U4atac snRNA binding"/>
    <property type="evidence" value="ECO:0000250"/>
    <property type="project" value="UniProtKB"/>
</dbReference>
<dbReference type="GO" id="GO:0000398">
    <property type="term" value="P:mRNA splicing, via spliceosome"/>
    <property type="evidence" value="ECO:0000250"/>
    <property type="project" value="UniProtKB"/>
</dbReference>
<dbReference type="GO" id="GO:0042274">
    <property type="term" value="P:ribosomal small subunit biogenesis"/>
    <property type="evidence" value="ECO:0000250"/>
    <property type="project" value="UniProtKB"/>
</dbReference>
<dbReference type="CDD" id="cd21104">
    <property type="entry name" value="SNU13"/>
    <property type="match status" value="1"/>
</dbReference>
<dbReference type="FunFam" id="3.30.1330.30:FF:000002">
    <property type="entry name" value="NHP2-like protein 1 homolog"/>
    <property type="match status" value="1"/>
</dbReference>
<dbReference type="Gene3D" id="3.30.1330.30">
    <property type="match status" value="1"/>
</dbReference>
<dbReference type="InterPro" id="IPR050257">
    <property type="entry name" value="eL8/uL1-like"/>
</dbReference>
<dbReference type="InterPro" id="IPR002415">
    <property type="entry name" value="H/ACA_rnp_Nhp2-like"/>
</dbReference>
<dbReference type="InterPro" id="IPR029064">
    <property type="entry name" value="Ribosomal_eL30-like_sf"/>
</dbReference>
<dbReference type="InterPro" id="IPR004037">
    <property type="entry name" value="Ribosomal_eL8-like_CS"/>
</dbReference>
<dbReference type="InterPro" id="IPR004038">
    <property type="entry name" value="Ribosomal_eL8/eL30/eS12/Gad45"/>
</dbReference>
<dbReference type="InterPro" id="IPR018492">
    <property type="entry name" value="Ribosomal_eL8/Nhp2"/>
</dbReference>
<dbReference type="PANTHER" id="PTHR23105">
    <property type="entry name" value="RIBOSOMAL PROTEIN L7AE FAMILY MEMBER"/>
    <property type="match status" value="1"/>
</dbReference>
<dbReference type="Pfam" id="PF01248">
    <property type="entry name" value="Ribosomal_L7Ae"/>
    <property type="match status" value="1"/>
</dbReference>
<dbReference type="PRINTS" id="PR00881">
    <property type="entry name" value="L7ARS6FAMILY"/>
</dbReference>
<dbReference type="PRINTS" id="PR00883">
    <property type="entry name" value="NUCLEARHMG"/>
</dbReference>
<dbReference type="SUPFAM" id="SSF55315">
    <property type="entry name" value="L30e-like"/>
    <property type="match status" value="1"/>
</dbReference>
<dbReference type="PROSITE" id="PS01082">
    <property type="entry name" value="RIBOSOMAL_L7AE"/>
    <property type="match status" value="1"/>
</dbReference>
<gene>
    <name evidence="1" type="primary">SNU13</name>
    <name type="synonym">NHP2L1</name>
    <name type="ORF">QtrA-11204</name>
</gene>
<keyword id="KW-0007">Acetylation</keyword>
<keyword id="KW-0507">mRNA processing</keyword>
<keyword id="KW-0508">mRNA splicing</keyword>
<keyword id="KW-0539">Nucleus</keyword>
<keyword id="KW-0597">Phosphoprotein</keyword>
<keyword id="KW-1185">Reference proteome</keyword>
<keyword id="KW-0687">Ribonucleoprotein</keyword>
<keyword id="KW-0694">RNA-binding</keyword>
<keyword id="KW-0747">Spliceosome</keyword>
<protein>
    <recommendedName>
        <fullName>NHP2-like protein 1</fullName>
    </recommendedName>
    <alternativeName>
        <fullName>High mobility group-like nuclear protein 2 homolog 1</fullName>
    </alternativeName>
    <alternativeName>
        <fullName evidence="1">U4/U6.U5 small nuclear ribonucleoprotein SNU13</fullName>
    </alternativeName>
    <alternativeName>
        <fullName>U4/U6.U5 tri-snRNP 15.5 kDa protein</fullName>
    </alternativeName>
    <component>
        <recommendedName>
            <fullName>NHP2-like protein 1, N-terminally processed</fullName>
        </recommendedName>
    </component>
</protein>